<dbReference type="EC" id="3.6.4.-" evidence="7"/>
<dbReference type="EMBL" id="AP008210">
    <property type="protein sequence ID" value="BAH92889.1"/>
    <property type="status" value="ALT_SEQ"/>
    <property type="molecule type" value="Genomic_DNA"/>
</dbReference>
<dbReference type="EMBL" id="AP014960">
    <property type="protein sequence ID" value="BAS91802.1"/>
    <property type="molecule type" value="Genomic_DNA"/>
</dbReference>
<dbReference type="SMR" id="A0A0P0WGX7"/>
<dbReference type="FunCoup" id="A0A0P0WGX7">
    <property type="interactions" value="48"/>
</dbReference>
<dbReference type="STRING" id="39947.A0A0P0WGX7"/>
<dbReference type="PaxDb" id="39947-A0A0P0WGX7"/>
<dbReference type="EnsemblPlants" id="Os04t0692750-01">
    <property type="protein sequence ID" value="Os04t0692750-01"/>
    <property type="gene ID" value="Os04g0692750"/>
</dbReference>
<dbReference type="GeneID" id="9266414"/>
<dbReference type="Gramene" id="Os04t0692750-01">
    <property type="protein sequence ID" value="Os04t0692750-01"/>
    <property type="gene ID" value="Os04g0692750"/>
</dbReference>
<dbReference type="KEGG" id="dosa:Os04g0692750"/>
<dbReference type="KEGG" id="osa:9266414"/>
<dbReference type="eggNOG" id="KOG0387">
    <property type="taxonomic scope" value="Eukaryota"/>
</dbReference>
<dbReference type="InParanoid" id="A0A0P0WGX7"/>
<dbReference type="OrthoDB" id="413460at2759"/>
<dbReference type="Proteomes" id="UP000000763">
    <property type="component" value="Chromosome 4"/>
</dbReference>
<dbReference type="Proteomes" id="UP000059680">
    <property type="component" value="Chromosome 4"/>
</dbReference>
<dbReference type="GO" id="GO:0005694">
    <property type="term" value="C:chromosome"/>
    <property type="evidence" value="ECO:0000314"/>
    <property type="project" value="UniProtKB"/>
</dbReference>
<dbReference type="GO" id="GO:0005737">
    <property type="term" value="C:cytoplasm"/>
    <property type="evidence" value="ECO:0000314"/>
    <property type="project" value="UniProtKB"/>
</dbReference>
<dbReference type="GO" id="GO:0005524">
    <property type="term" value="F:ATP binding"/>
    <property type="evidence" value="ECO:0007669"/>
    <property type="project" value="UniProtKB-KW"/>
</dbReference>
<dbReference type="GO" id="GO:0015616">
    <property type="term" value="F:DNA translocase activity"/>
    <property type="evidence" value="ECO:0000318"/>
    <property type="project" value="GO_Central"/>
</dbReference>
<dbReference type="GO" id="GO:0004386">
    <property type="term" value="F:helicase activity"/>
    <property type="evidence" value="ECO:0007669"/>
    <property type="project" value="UniProtKB-KW"/>
</dbReference>
<dbReference type="GO" id="GO:0016787">
    <property type="term" value="F:hydrolase activity"/>
    <property type="evidence" value="ECO:0007669"/>
    <property type="project" value="UniProtKB-KW"/>
</dbReference>
<dbReference type="GO" id="GO:0051301">
    <property type="term" value="P:cell division"/>
    <property type="evidence" value="ECO:0007669"/>
    <property type="project" value="UniProtKB-KW"/>
</dbReference>
<dbReference type="GO" id="GO:0006310">
    <property type="term" value="P:DNA recombination"/>
    <property type="evidence" value="ECO:0007669"/>
    <property type="project" value="UniProtKB-KW"/>
</dbReference>
<dbReference type="GO" id="GO:0006281">
    <property type="term" value="P:DNA repair"/>
    <property type="evidence" value="ECO:0000318"/>
    <property type="project" value="GO_Central"/>
</dbReference>
<dbReference type="GO" id="GO:2000014">
    <property type="term" value="P:regulation of endosperm development"/>
    <property type="evidence" value="ECO:0000315"/>
    <property type="project" value="UniProtKB"/>
</dbReference>
<dbReference type="GO" id="GO:0010965">
    <property type="term" value="P:regulation of mitotic sister chromatid separation"/>
    <property type="evidence" value="ECO:0000315"/>
    <property type="project" value="UniProtKB"/>
</dbReference>
<dbReference type="CDD" id="cd18793">
    <property type="entry name" value="SF2_C_SNF"/>
    <property type="match status" value="1"/>
</dbReference>
<dbReference type="FunFam" id="3.40.50.10810:FF:000055">
    <property type="entry name" value="Protein CHROMATIN REMODELING 24"/>
    <property type="match status" value="1"/>
</dbReference>
<dbReference type="Gene3D" id="3.40.50.300">
    <property type="entry name" value="P-loop containing nucleotide triphosphate hydrolases"/>
    <property type="match status" value="1"/>
</dbReference>
<dbReference type="Gene3D" id="3.40.50.10810">
    <property type="entry name" value="Tandem AAA-ATPase domain"/>
    <property type="match status" value="1"/>
</dbReference>
<dbReference type="InterPro" id="IPR014001">
    <property type="entry name" value="Helicase_ATP-bd"/>
</dbReference>
<dbReference type="InterPro" id="IPR001650">
    <property type="entry name" value="Helicase_C-like"/>
</dbReference>
<dbReference type="InterPro" id="IPR027417">
    <property type="entry name" value="P-loop_NTPase"/>
</dbReference>
<dbReference type="InterPro" id="IPR038718">
    <property type="entry name" value="SNF2-like_sf"/>
</dbReference>
<dbReference type="InterPro" id="IPR049730">
    <property type="entry name" value="SNF2/RAD54-like_C"/>
</dbReference>
<dbReference type="InterPro" id="IPR000330">
    <property type="entry name" value="SNF2_N"/>
</dbReference>
<dbReference type="InterPro" id="IPR050496">
    <property type="entry name" value="SNF2_RAD54_helicase_repair"/>
</dbReference>
<dbReference type="PANTHER" id="PTHR45629:SF7">
    <property type="entry name" value="DNA EXCISION REPAIR PROTEIN ERCC-6-RELATED"/>
    <property type="match status" value="1"/>
</dbReference>
<dbReference type="PANTHER" id="PTHR45629">
    <property type="entry name" value="SNF2/RAD54 FAMILY MEMBER"/>
    <property type="match status" value="1"/>
</dbReference>
<dbReference type="Pfam" id="PF00271">
    <property type="entry name" value="Helicase_C"/>
    <property type="match status" value="1"/>
</dbReference>
<dbReference type="Pfam" id="PF00176">
    <property type="entry name" value="SNF2-rel_dom"/>
    <property type="match status" value="1"/>
</dbReference>
<dbReference type="SMART" id="SM00487">
    <property type="entry name" value="DEXDc"/>
    <property type="match status" value="1"/>
</dbReference>
<dbReference type="SMART" id="SM00490">
    <property type="entry name" value="HELICc"/>
    <property type="match status" value="1"/>
</dbReference>
<dbReference type="SUPFAM" id="SSF52540">
    <property type="entry name" value="P-loop containing nucleoside triphosphate hydrolases"/>
    <property type="match status" value="2"/>
</dbReference>
<dbReference type="PROSITE" id="PS51192">
    <property type="entry name" value="HELICASE_ATP_BIND_1"/>
    <property type="match status" value="1"/>
</dbReference>
<dbReference type="PROSITE" id="PS51194">
    <property type="entry name" value="HELICASE_CTER"/>
    <property type="match status" value="1"/>
</dbReference>
<accession>A0A0P0WGX7</accession>
<accession>C7J207</accession>
<protein>
    <recommendedName>
        <fullName evidence="7">SNF2 domain-containing protein ENL1</fullName>
        <ecNumber evidence="7">3.6.4.-</ecNumber>
    </recommendedName>
    <alternativeName>
        <fullName evidence="6">Protein ENDOSPERMLESS 1</fullName>
    </alternativeName>
</protein>
<comment type="function">
    <text evidence="1 5">DNA helicase that acts as an essential component of the spindle assembly checkpoint (By similarity). Plays an indispensable role in the development of seed endosperm (PubMed:25327517). Is required to secure sister chromosome separation during endosperm syncytial mitosis, which involves extremely rapid free nuclear cycles (PubMed:25327517).</text>
</comment>
<comment type="subcellular location">
    <subcellularLocation>
        <location evidence="5">Cytoplasm</location>
    </subcellularLocation>
    <subcellularLocation>
        <location evidence="5">Chromosome</location>
    </subcellularLocation>
    <text evidence="5">Localizes to the cytoplasm during interphase, but moves to the chromosome arms during mitosis.</text>
</comment>
<comment type="tissue specificity">
    <text evidence="5">Expressed in ovaries, roots, shoots and leaves.</text>
</comment>
<comment type="disruption phenotype">
    <text evidence="5">Lack of seed endosperm, alteration of ovary and embryo shape, reduced root and plant growth, but fertile plants.</text>
</comment>
<comment type="similarity">
    <text evidence="7">Belongs to the SNF2/RAD54 helicase family.</text>
</comment>
<comment type="sequence caution" evidence="7">
    <conflict type="erroneous gene model prediction">
        <sequence resource="EMBL-CDS" id="BAH92889"/>
    </conflict>
</comment>
<gene>
    <name evidence="6" type="primary">ENL1</name>
    <name evidence="8" type="ordered locus">Os04g0692750</name>
    <name evidence="7" type="ordered locus">LOC_Os04g59624</name>
</gene>
<reference key="1">
    <citation type="journal article" date="2002" name="Nature">
        <title>Sequence and analysis of rice chromosome 4.</title>
        <authorList>
            <person name="Feng Q."/>
            <person name="Zhang Y."/>
            <person name="Hao P."/>
            <person name="Wang S."/>
            <person name="Fu G."/>
            <person name="Huang Y."/>
            <person name="Li Y."/>
            <person name="Zhu J."/>
            <person name="Liu Y."/>
            <person name="Hu X."/>
            <person name="Jia P."/>
            <person name="Zhang Y."/>
            <person name="Zhao Q."/>
            <person name="Ying K."/>
            <person name="Yu S."/>
            <person name="Tang Y."/>
            <person name="Weng Q."/>
            <person name="Zhang L."/>
            <person name="Lu Y."/>
            <person name="Mu J."/>
            <person name="Lu Y."/>
            <person name="Zhang L.S."/>
            <person name="Yu Z."/>
            <person name="Fan D."/>
            <person name="Liu X."/>
            <person name="Lu T."/>
            <person name="Li C."/>
            <person name="Wu Y."/>
            <person name="Sun T."/>
            <person name="Lei H."/>
            <person name="Li T."/>
            <person name="Hu H."/>
            <person name="Guan J."/>
            <person name="Wu M."/>
            <person name="Zhang R."/>
            <person name="Zhou B."/>
            <person name="Chen Z."/>
            <person name="Chen L."/>
            <person name="Jin Z."/>
            <person name="Wang R."/>
            <person name="Yin H."/>
            <person name="Cai Z."/>
            <person name="Ren S."/>
            <person name="Lv G."/>
            <person name="Gu W."/>
            <person name="Zhu G."/>
            <person name="Tu Y."/>
            <person name="Jia J."/>
            <person name="Zhang Y."/>
            <person name="Chen J."/>
            <person name="Kang H."/>
            <person name="Chen X."/>
            <person name="Shao C."/>
            <person name="Sun Y."/>
            <person name="Hu Q."/>
            <person name="Zhang X."/>
            <person name="Zhang W."/>
            <person name="Wang L."/>
            <person name="Ding C."/>
            <person name="Sheng H."/>
            <person name="Gu J."/>
            <person name="Chen S."/>
            <person name="Ni L."/>
            <person name="Zhu F."/>
            <person name="Chen W."/>
            <person name="Lan L."/>
            <person name="Lai Y."/>
            <person name="Cheng Z."/>
            <person name="Gu M."/>
            <person name="Jiang J."/>
            <person name="Li J."/>
            <person name="Hong G."/>
            <person name="Xue Y."/>
            <person name="Han B."/>
        </authorList>
    </citation>
    <scope>NUCLEOTIDE SEQUENCE [LARGE SCALE GENOMIC DNA]</scope>
    <source>
        <strain>cv. Nipponbare</strain>
    </source>
</reference>
<reference key="2">
    <citation type="journal article" date="2005" name="Nature">
        <title>The map-based sequence of the rice genome.</title>
        <authorList>
            <consortium name="International rice genome sequencing project (IRGSP)"/>
        </authorList>
    </citation>
    <scope>NUCLEOTIDE SEQUENCE [LARGE SCALE GENOMIC DNA]</scope>
    <source>
        <strain>cv. Nipponbare</strain>
    </source>
</reference>
<reference key="3">
    <citation type="journal article" date="2008" name="Nucleic Acids Res.">
        <title>The rice annotation project database (RAP-DB): 2008 update.</title>
        <authorList>
            <consortium name="The rice annotation project (RAP)"/>
        </authorList>
    </citation>
    <scope>GENOME REANNOTATION</scope>
    <source>
        <strain>cv. Nipponbare</strain>
    </source>
</reference>
<reference key="4">
    <citation type="journal article" date="2013" name="Rice">
        <title>Improvement of the Oryza sativa Nipponbare reference genome using next generation sequence and optical map data.</title>
        <authorList>
            <person name="Kawahara Y."/>
            <person name="de la Bastide M."/>
            <person name="Hamilton J.P."/>
            <person name="Kanamori H."/>
            <person name="McCombie W.R."/>
            <person name="Ouyang S."/>
            <person name="Schwartz D.C."/>
            <person name="Tanaka T."/>
            <person name="Wu J."/>
            <person name="Zhou S."/>
            <person name="Childs K.L."/>
            <person name="Davidson R.M."/>
            <person name="Lin H."/>
            <person name="Quesada-Ocampo L."/>
            <person name="Vaillancourt B."/>
            <person name="Sakai H."/>
            <person name="Lee S.S."/>
            <person name="Kim J."/>
            <person name="Numa H."/>
            <person name="Itoh T."/>
            <person name="Buell C.R."/>
            <person name="Matsumoto T."/>
        </authorList>
    </citation>
    <scope>GENOME REANNOTATION</scope>
    <source>
        <strain>cv. Nipponbare</strain>
    </source>
</reference>
<reference key="5">
    <citation type="journal article" date="2015" name="Plant J.">
        <title>Rice SNF2 family helicase ENL1 is essential for syncytial endosperm development.</title>
        <authorList>
            <person name="Hara T."/>
            <person name="Katoh H."/>
            <person name="Ogawa D."/>
            <person name="Kagaya Y."/>
            <person name="Sato Y."/>
            <person name="Kitano H."/>
            <person name="Nagato Y."/>
            <person name="Ishikawa R."/>
            <person name="Ono A."/>
            <person name="Kinoshita T."/>
            <person name="Takeda S."/>
            <person name="Hattori T."/>
        </authorList>
    </citation>
    <scope>FUNCTION</scope>
    <scope>SUBCELLULAR LOCATION</scope>
    <scope>TISSUE SPECIFICITY</scope>
    <scope>DISRUPTION PHENOTYPE</scope>
</reference>
<keyword id="KW-0067">ATP-binding</keyword>
<keyword id="KW-0131">Cell cycle</keyword>
<keyword id="KW-0132">Cell division</keyword>
<keyword id="KW-0158">Chromosome</keyword>
<keyword id="KW-0963">Cytoplasm</keyword>
<keyword id="KW-0233">DNA recombination</keyword>
<keyword id="KW-0347">Helicase</keyword>
<keyword id="KW-0378">Hydrolase</keyword>
<keyword id="KW-0498">Mitosis</keyword>
<keyword id="KW-0547">Nucleotide-binding</keyword>
<keyword id="KW-1185">Reference proteome</keyword>
<proteinExistence type="evidence at transcript level"/>
<organism>
    <name type="scientific">Oryza sativa subsp. japonica</name>
    <name type="common">Rice</name>
    <dbReference type="NCBI Taxonomy" id="39947"/>
    <lineage>
        <taxon>Eukaryota</taxon>
        <taxon>Viridiplantae</taxon>
        <taxon>Streptophyta</taxon>
        <taxon>Embryophyta</taxon>
        <taxon>Tracheophyta</taxon>
        <taxon>Spermatophyta</taxon>
        <taxon>Magnoliopsida</taxon>
        <taxon>Liliopsida</taxon>
        <taxon>Poales</taxon>
        <taxon>Poaceae</taxon>
        <taxon>BOP clade</taxon>
        <taxon>Oryzoideae</taxon>
        <taxon>Oryzeae</taxon>
        <taxon>Oryzinae</taxon>
        <taxon>Oryza</taxon>
        <taxon>Oryza sativa</taxon>
    </lineage>
</organism>
<name>ENL1_ORYSJ</name>
<evidence type="ECO:0000250" key="1">
    <source>
        <dbReference type="UniProtKB" id="Q2NKX8"/>
    </source>
</evidence>
<evidence type="ECO:0000255" key="2">
    <source>
        <dbReference type="PROSITE-ProRule" id="PRU00541"/>
    </source>
</evidence>
<evidence type="ECO:0000255" key="3">
    <source>
        <dbReference type="PROSITE-ProRule" id="PRU00542"/>
    </source>
</evidence>
<evidence type="ECO:0000256" key="4">
    <source>
        <dbReference type="SAM" id="MobiDB-lite"/>
    </source>
</evidence>
<evidence type="ECO:0000269" key="5">
    <source>
    </source>
</evidence>
<evidence type="ECO:0000303" key="6">
    <source>
    </source>
</evidence>
<evidence type="ECO:0000305" key="7"/>
<evidence type="ECO:0000312" key="8">
    <source>
        <dbReference type="EMBL" id="BAS91802.1"/>
    </source>
</evidence>
<sequence length="987" mass="110498">MASPPPFDICGDLDDDPTPPAPTPLAAPTPNGLNDRLLRLTRTHQRGPSQNPNPNPNPNPKPPPPPPPQEPEPAKVKLAGRRRLCKLSTAGDESAGDDDSIRDILDDLTTRLDSLSVDRPTARPRPHVSPLPCALHADPDPSQSQLNDGTKPSSSFVDCDDDDDDAGGAYGGFGVKEEVTRKVFKASSSFGGRGNDDKMKAKGAYAFDTVSRKTTTESKASKFFGDYDDEDDIDQDAENGKENHADDVGWEKTEDFKMEPTGTGVTRKPYNLPGRIFNMLYPHQREGLRWLWVLHCRGTGGILGDDMGLGKTMQVSAFLAGLFHSRLIKRVLVVAPKTLLTHWTKELSVVSLKDKIRDYSGPNANARNYELKYAFKEGGILLTTYDIVRNNFKMIKGNFTNDFDDEEETLWNYVILDEGHIIKNPKTQRAQSLFEIPCAHRIVISGTPIQNNLKEMWALFYFCCPEVLGDKEQFKARYEHAIIQGNDKNATNRQKHIGSNVAKELRERIKPYFLRRMKNEVFLDSGTGEDKKLAKKNELIIWLKLTSCQRQLYEAFLNSELVHSSMQGSPLAAITILKKICDHPLLLTKKAAEGVLEGMDAMLNNQEMGMVEKMAMNLADMAHDDDDVELQVGQDVSCKLSFMMSLLQNLVSEGHNVLIFSQTRKMLNIIQEAIILEGYKFLRIDGTTKISERERIVKDFQEGPGAPIFLLTTQVGGLGLTLTKAARVIVVDPAWNPSTDNQSVDRAYRIGQMKDVIVYRLMTSGTIEEKIYKLQVFKGALFRTATEHKEQTRYFSKRDIQELFSLPEQGFDVSLTQKQLQEEHGQQLVMDDSLRKHIQFLEQQGIAGVSHHSLLFSKTAILPTLNDNDGLDSRRAMPMAKHYYKGASSDYVANGAAYAMKPKEFIARTYSPNSTSTESPEEIKAKINRLSQTLANTVLVAKLPDRGDKIRRQINELDEKLTVIESSPEPLERKGPTEVICLDDLSV</sequence>
<feature type="chain" id="PRO_0000452398" description="SNF2 domain-containing protein ENL1">
    <location>
        <begin position="1"/>
        <end position="987"/>
    </location>
</feature>
<feature type="domain" description="Helicase ATP-binding" evidence="2">
    <location>
        <begin position="292"/>
        <end position="466"/>
    </location>
</feature>
<feature type="domain" description="Helicase C-terminal" evidence="3">
    <location>
        <begin position="645"/>
        <end position="801"/>
    </location>
</feature>
<feature type="region of interest" description="Disordered" evidence="4">
    <location>
        <begin position="1"/>
        <end position="172"/>
    </location>
</feature>
<feature type="region of interest" description="Disordered" evidence="4">
    <location>
        <begin position="224"/>
        <end position="245"/>
    </location>
</feature>
<feature type="short sequence motif" description="DEAH box" evidence="2">
    <location>
        <begin position="417"/>
        <end position="420"/>
    </location>
</feature>
<feature type="compositionally biased region" description="Pro residues" evidence="4">
    <location>
        <begin position="18"/>
        <end position="27"/>
    </location>
</feature>
<feature type="compositionally biased region" description="Pro residues" evidence="4">
    <location>
        <begin position="51"/>
        <end position="71"/>
    </location>
</feature>
<feature type="compositionally biased region" description="Basic and acidic residues" evidence="4">
    <location>
        <begin position="99"/>
        <end position="110"/>
    </location>
</feature>
<feature type="compositionally biased region" description="Polar residues" evidence="4">
    <location>
        <begin position="141"/>
        <end position="156"/>
    </location>
</feature>
<feature type="compositionally biased region" description="Acidic residues" evidence="4">
    <location>
        <begin position="226"/>
        <end position="237"/>
    </location>
</feature>
<feature type="binding site" evidence="2">
    <location>
        <begin position="305"/>
        <end position="312"/>
    </location>
    <ligand>
        <name>ATP</name>
        <dbReference type="ChEBI" id="CHEBI:30616"/>
    </ligand>
</feature>